<comment type="function">
    <text evidence="1">Fatty acid desaturase involved in the production of chloroplast-specific phosphatidylglycerol molecular species. Catalyzes the formation of a trans double bond introduced close to the carboxyl group of palmitic acid, which is specifically esterified to the sn-2 glyceryl carbon of phosphatidylglycerol (By similarity).</text>
</comment>
<comment type="pathway">
    <text>Lipid metabolism; fatty acid metabolism.</text>
</comment>
<comment type="subcellular location">
    <subcellularLocation>
        <location evidence="1">Plastid</location>
        <location evidence="1">Chloroplast membrane</location>
        <topology evidence="1">Multi-pass membrane protein</topology>
    </subcellularLocation>
</comment>
<comment type="similarity">
    <text evidence="3">Belongs to the fatty acid desaturase CarF family.</text>
</comment>
<sequence>MAVSFQTKNPLRPITNIPRSYGPTRVRVTCSVTTTNPQLNHENLVVEKRLVNPPLSKNNDPTLQSTWTHRLWVAAGSTTIFASFAKSIIGGFGSHLWLQPALACYAGYVFADLGSGVYHWAIDNYGGASTPIVGAQLEASQGHHKYPWTITKRQFANNSYTIARAITFIVLPLNLAINNPLFHSFVSTFAFCILLSQQFHAWAHGTKSKLPPLVMALQDMGLLVSRKDHPGHHQAPYNSNYCVVSGAWNKVLDESNLFKALEMALFFQFGVRPNSWNEPNSDWTEETETNFFTKI</sequence>
<evidence type="ECO:0000250" key="1"/>
<evidence type="ECO:0000255" key="2"/>
<evidence type="ECO:0000305" key="3"/>
<reference key="1">
    <citation type="journal article" date="2000" name="Nature">
        <title>Sequence and analysis of chromosome 1 of the plant Arabidopsis thaliana.</title>
        <authorList>
            <person name="Theologis A."/>
            <person name="Ecker J.R."/>
            <person name="Palm C.J."/>
            <person name="Federspiel N.A."/>
            <person name="Kaul S."/>
            <person name="White O."/>
            <person name="Alonso J."/>
            <person name="Altafi H."/>
            <person name="Araujo R."/>
            <person name="Bowman C.L."/>
            <person name="Brooks S.Y."/>
            <person name="Buehler E."/>
            <person name="Chan A."/>
            <person name="Chao Q."/>
            <person name="Chen H."/>
            <person name="Cheuk R.F."/>
            <person name="Chin C.W."/>
            <person name="Chung M.K."/>
            <person name="Conn L."/>
            <person name="Conway A.B."/>
            <person name="Conway A.R."/>
            <person name="Creasy T.H."/>
            <person name="Dewar K."/>
            <person name="Dunn P."/>
            <person name="Etgu P."/>
            <person name="Feldblyum T.V."/>
            <person name="Feng J.-D."/>
            <person name="Fong B."/>
            <person name="Fujii C.Y."/>
            <person name="Gill J.E."/>
            <person name="Goldsmith A.D."/>
            <person name="Haas B."/>
            <person name="Hansen N.F."/>
            <person name="Hughes B."/>
            <person name="Huizar L."/>
            <person name="Hunter J.L."/>
            <person name="Jenkins J."/>
            <person name="Johnson-Hopson C."/>
            <person name="Khan S."/>
            <person name="Khaykin E."/>
            <person name="Kim C.J."/>
            <person name="Koo H.L."/>
            <person name="Kremenetskaia I."/>
            <person name="Kurtz D.B."/>
            <person name="Kwan A."/>
            <person name="Lam B."/>
            <person name="Langin-Hooper S."/>
            <person name="Lee A."/>
            <person name="Lee J.M."/>
            <person name="Lenz C.A."/>
            <person name="Li J.H."/>
            <person name="Li Y.-P."/>
            <person name="Lin X."/>
            <person name="Liu S.X."/>
            <person name="Liu Z.A."/>
            <person name="Luros J.S."/>
            <person name="Maiti R."/>
            <person name="Marziali A."/>
            <person name="Militscher J."/>
            <person name="Miranda M."/>
            <person name="Nguyen M."/>
            <person name="Nierman W.C."/>
            <person name="Osborne B.I."/>
            <person name="Pai G."/>
            <person name="Peterson J."/>
            <person name="Pham P.K."/>
            <person name="Rizzo M."/>
            <person name="Rooney T."/>
            <person name="Rowley D."/>
            <person name="Sakano H."/>
            <person name="Salzberg S.L."/>
            <person name="Schwartz J.R."/>
            <person name="Shinn P."/>
            <person name="Southwick A.M."/>
            <person name="Sun H."/>
            <person name="Tallon L.J."/>
            <person name="Tambunga G."/>
            <person name="Toriumi M.J."/>
            <person name="Town C.D."/>
            <person name="Utterback T."/>
            <person name="Van Aken S."/>
            <person name="Vaysberg M."/>
            <person name="Vysotskaia V.S."/>
            <person name="Walker M."/>
            <person name="Wu D."/>
            <person name="Yu G."/>
            <person name="Fraser C.M."/>
            <person name="Venter J.C."/>
            <person name="Davis R.W."/>
        </authorList>
    </citation>
    <scope>NUCLEOTIDE SEQUENCE [LARGE SCALE GENOMIC DNA]</scope>
    <source>
        <strain>cv. Columbia</strain>
    </source>
</reference>
<reference key="2">
    <citation type="journal article" date="2017" name="Plant J.">
        <title>Araport11: a complete reannotation of the Arabidopsis thaliana reference genome.</title>
        <authorList>
            <person name="Cheng C.Y."/>
            <person name="Krishnakumar V."/>
            <person name="Chan A.P."/>
            <person name="Thibaud-Nissen F."/>
            <person name="Schobel S."/>
            <person name="Town C.D."/>
        </authorList>
    </citation>
    <scope>GENOME REANNOTATION</scope>
    <source>
        <strain>cv. Columbia</strain>
    </source>
</reference>
<reference key="3">
    <citation type="journal article" date="2009" name="Plant J.">
        <title>FATTY ACID DESATURASE4 of Arabidopsis encodes a protein distinct from characterized fatty acid desaturases.</title>
        <authorList>
            <person name="Gao J."/>
            <person name="Ajjawi I."/>
            <person name="Manoli A."/>
            <person name="Sawin A."/>
            <person name="Xu C."/>
            <person name="Froehlich J.E."/>
            <person name="Last R.L."/>
            <person name="Benning C."/>
        </authorList>
    </citation>
    <scope>GENE FAMILY</scope>
    <scope>NOMENCLATURE</scope>
</reference>
<feature type="transit peptide" description="Chloroplast" evidence="2">
    <location>
        <begin position="1"/>
        <end position="29"/>
    </location>
</feature>
<feature type="chain" id="PRO_0000429928" description="Fatty acid desaturase 4-like 1, chloroplastic">
    <location>
        <begin position="30"/>
        <end position="295"/>
    </location>
</feature>
<feature type="transmembrane region" description="Helical" evidence="2">
    <location>
        <begin position="72"/>
        <end position="92"/>
    </location>
</feature>
<feature type="transmembrane region" description="Helical" evidence="2">
    <location>
        <begin position="102"/>
        <end position="122"/>
    </location>
</feature>
<feature type="transmembrane region" description="Helical" evidence="2">
    <location>
        <begin position="175"/>
        <end position="195"/>
    </location>
</feature>
<keyword id="KW-0150">Chloroplast</keyword>
<keyword id="KW-0276">Fatty acid metabolism</keyword>
<keyword id="KW-0443">Lipid metabolism</keyword>
<keyword id="KW-0472">Membrane</keyword>
<keyword id="KW-0560">Oxidoreductase</keyword>
<keyword id="KW-0934">Plastid</keyword>
<keyword id="KW-1185">Reference proteome</keyword>
<keyword id="KW-0809">Transit peptide</keyword>
<keyword id="KW-0812">Transmembrane</keyword>
<keyword id="KW-1133">Transmembrane helix</keyword>
<organism>
    <name type="scientific">Arabidopsis thaliana</name>
    <name type="common">Mouse-ear cress</name>
    <dbReference type="NCBI Taxonomy" id="3702"/>
    <lineage>
        <taxon>Eukaryota</taxon>
        <taxon>Viridiplantae</taxon>
        <taxon>Streptophyta</taxon>
        <taxon>Embryophyta</taxon>
        <taxon>Tracheophyta</taxon>
        <taxon>Spermatophyta</taxon>
        <taxon>Magnoliopsida</taxon>
        <taxon>eudicotyledons</taxon>
        <taxon>Gunneridae</taxon>
        <taxon>Pentapetalae</taxon>
        <taxon>rosids</taxon>
        <taxon>malvids</taxon>
        <taxon>Brassicales</taxon>
        <taxon>Brassicaceae</taxon>
        <taxon>Camelineae</taxon>
        <taxon>Arabidopsis</taxon>
    </lineage>
</organism>
<proteinExistence type="inferred from homology"/>
<accession>O04584</accession>
<gene>
    <name type="primary">FAD4L1</name>
    <name type="ordered locus">At1g62190</name>
    <name type="ORF">F19K23.12</name>
</gene>
<dbReference type="EC" id="1.14.19.-"/>
<dbReference type="EMBL" id="AC000375">
    <property type="protein sequence ID" value="AAB60765.1"/>
    <property type="molecule type" value="Genomic_DNA"/>
</dbReference>
<dbReference type="EMBL" id="CP002684">
    <property type="protein sequence ID" value="AEE33934.1"/>
    <property type="molecule type" value="Genomic_DNA"/>
</dbReference>
<dbReference type="PIR" id="D96648">
    <property type="entry name" value="D96648"/>
</dbReference>
<dbReference type="RefSeq" id="NP_176410.1">
    <property type="nucleotide sequence ID" value="NM_104900.3"/>
</dbReference>
<dbReference type="FunCoup" id="O04584">
    <property type="interactions" value="919"/>
</dbReference>
<dbReference type="STRING" id="3702.O04584"/>
<dbReference type="PaxDb" id="3702-AT1G62190.1"/>
<dbReference type="ProteomicsDB" id="230408"/>
<dbReference type="EnsemblPlants" id="AT1G62190.1">
    <property type="protein sequence ID" value="AT1G62190.1"/>
    <property type="gene ID" value="AT1G62190"/>
</dbReference>
<dbReference type="GeneID" id="842515"/>
<dbReference type="Gramene" id="AT1G62190.1">
    <property type="protein sequence ID" value="AT1G62190.1"/>
    <property type="gene ID" value="AT1G62190"/>
</dbReference>
<dbReference type="KEGG" id="ath:AT1G62190"/>
<dbReference type="Araport" id="AT1G62190"/>
<dbReference type="TAIR" id="AT1G62190"/>
<dbReference type="eggNOG" id="KOG3011">
    <property type="taxonomic scope" value="Eukaryota"/>
</dbReference>
<dbReference type="HOGENOM" id="CLU_065233_0_0_1"/>
<dbReference type="InParanoid" id="O04584"/>
<dbReference type="OMA" id="LEPCNNL"/>
<dbReference type="PhylomeDB" id="O04584"/>
<dbReference type="UniPathway" id="UPA00199"/>
<dbReference type="PRO" id="PR:O04584"/>
<dbReference type="Proteomes" id="UP000006548">
    <property type="component" value="Chromosome 1"/>
</dbReference>
<dbReference type="GO" id="GO:0031969">
    <property type="term" value="C:chloroplast membrane"/>
    <property type="evidence" value="ECO:0007669"/>
    <property type="project" value="UniProtKB-SubCell"/>
</dbReference>
<dbReference type="GO" id="GO:0016491">
    <property type="term" value="F:oxidoreductase activity"/>
    <property type="evidence" value="ECO:0007669"/>
    <property type="project" value="UniProtKB-KW"/>
</dbReference>
<dbReference type="GO" id="GO:0006631">
    <property type="term" value="P:fatty acid metabolic process"/>
    <property type="evidence" value="ECO:0007669"/>
    <property type="project" value="UniProtKB-UniPathway"/>
</dbReference>
<dbReference type="InterPro" id="IPR052864">
    <property type="entry name" value="Chloroplast_FAD_CarF"/>
</dbReference>
<dbReference type="InterPro" id="IPR019547">
    <property type="entry name" value="Lipid_desat"/>
</dbReference>
<dbReference type="PANTHER" id="PTHR48140">
    <property type="entry name" value="FATTY ACID DESATURASE 4, CHLOROPLASTIC-RELATED"/>
    <property type="match status" value="1"/>
</dbReference>
<dbReference type="PANTHER" id="PTHR48140:SF1">
    <property type="entry name" value="FATTY ACID DESATURASE 4, CHLOROPLASTIC-RELATED"/>
    <property type="match status" value="1"/>
</dbReference>
<dbReference type="Pfam" id="PF10520">
    <property type="entry name" value="Lipid_desat"/>
    <property type="match status" value="1"/>
</dbReference>
<name>FD4L1_ARATH</name>
<protein>
    <recommendedName>
        <fullName>Fatty acid desaturase 4-like 1, chloroplastic</fullName>
        <shortName>FAD4-L1</shortName>
        <ecNumber>1.14.19.-</ecNumber>
    </recommendedName>
</protein>